<comment type="function">
    <text evidence="1">Binds 23S rRNA and is also seen to make contacts with the A and possibly P site tRNAs.</text>
</comment>
<comment type="subunit">
    <text evidence="1">Part of the 50S ribosomal subunit.</text>
</comment>
<comment type="similarity">
    <text evidence="1">Belongs to the universal ribosomal protein uL16 family.</text>
</comment>
<feature type="chain" id="PRO_1000166373" description="Large ribosomal subunit protein uL16">
    <location>
        <begin position="1"/>
        <end position="137"/>
    </location>
</feature>
<protein>
    <recommendedName>
        <fullName evidence="1">Large ribosomal subunit protein uL16</fullName>
    </recommendedName>
    <alternativeName>
        <fullName evidence="2">50S ribosomal protein L16</fullName>
    </alternativeName>
</protein>
<sequence>MLQPKRTKYRKQFKGRIKGVAKGGSDLAFGEFGLKAQEPNRVNAREIEAARRAITRHMKRAGRVWIRVFPDVPVTAKPTEVRMGKGKGSVEYWACKVKPGRMMFEIDGVNEELAREALRLGAAKLSVKTRFVQRIAE</sequence>
<accession>C3MAY7</accession>
<evidence type="ECO:0000255" key="1">
    <source>
        <dbReference type="HAMAP-Rule" id="MF_01342"/>
    </source>
</evidence>
<evidence type="ECO:0000305" key="2"/>
<proteinExistence type="inferred from homology"/>
<name>RL16_SINFN</name>
<dbReference type="EMBL" id="CP001389">
    <property type="protein sequence ID" value="ACP24980.1"/>
    <property type="molecule type" value="Genomic_DNA"/>
</dbReference>
<dbReference type="RefSeq" id="WP_003536531.1">
    <property type="nucleotide sequence ID" value="NC_012587.1"/>
</dbReference>
<dbReference type="RefSeq" id="YP_002825733.1">
    <property type="nucleotide sequence ID" value="NC_012587.1"/>
</dbReference>
<dbReference type="SMR" id="C3MAY7"/>
<dbReference type="STRING" id="394.NGR_c11980"/>
<dbReference type="GeneID" id="89575687"/>
<dbReference type="KEGG" id="rhi:NGR_c11980"/>
<dbReference type="PATRIC" id="fig|394.7.peg.4014"/>
<dbReference type="eggNOG" id="COG0197">
    <property type="taxonomic scope" value="Bacteria"/>
</dbReference>
<dbReference type="HOGENOM" id="CLU_078858_2_1_5"/>
<dbReference type="OrthoDB" id="9802589at2"/>
<dbReference type="Proteomes" id="UP000001054">
    <property type="component" value="Chromosome"/>
</dbReference>
<dbReference type="GO" id="GO:0022625">
    <property type="term" value="C:cytosolic large ribosomal subunit"/>
    <property type="evidence" value="ECO:0007669"/>
    <property type="project" value="TreeGrafter"/>
</dbReference>
<dbReference type="GO" id="GO:0019843">
    <property type="term" value="F:rRNA binding"/>
    <property type="evidence" value="ECO:0007669"/>
    <property type="project" value="UniProtKB-UniRule"/>
</dbReference>
<dbReference type="GO" id="GO:0003735">
    <property type="term" value="F:structural constituent of ribosome"/>
    <property type="evidence" value="ECO:0007669"/>
    <property type="project" value="InterPro"/>
</dbReference>
<dbReference type="GO" id="GO:0000049">
    <property type="term" value="F:tRNA binding"/>
    <property type="evidence" value="ECO:0007669"/>
    <property type="project" value="UniProtKB-KW"/>
</dbReference>
<dbReference type="GO" id="GO:0006412">
    <property type="term" value="P:translation"/>
    <property type="evidence" value="ECO:0007669"/>
    <property type="project" value="UniProtKB-UniRule"/>
</dbReference>
<dbReference type="CDD" id="cd01433">
    <property type="entry name" value="Ribosomal_L16_L10e"/>
    <property type="match status" value="1"/>
</dbReference>
<dbReference type="FunFam" id="3.90.1170.10:FF:000001">
    <property type="entry name" value="50S ribosomal protein L16"/>
    <property type="match status" value="1"/>
</dbReference>
<dbReference type="Gene3D" id="3.90.1170.10">
    <property type="entry name" value="Ribosomal protein L10e/L16"/>
    <property type="match status" value="1"/>
</dbReference>
<dbReference type="HAMAP" id="MF_01342">
    <property type="entry name" value="Ribosomal_uL16"/>
    <property type="match status" value="1"/>
</dbReference>
<dbReference type="InterPro" id="IPR047873">
    <property type="entry name" value="Ribosomal_uL16"/>
</dbReference>
<dbReference type="InterPro" id="IPR000114">
    <property type="entry name" value="Ribosomal_uL16_bact-type"/>
</dbReference>
<dbReference type="InterPro" id="IPR020798">
    <property type="entry name" value="Ribosomal_uL16_CS"/>
</dbReference>
<dbReference type="InterPro" id="IPR016180">
    <property type="entry name" value="Ribosomal_uL16_dom"/>
</dbReference>
<dbReference type="InterPro" id="IPR036920">
    <property type="entry name" value="Ribosomal_uL16_sf"/>
</dbReference>
<dbReference type="NCBIfam" id="TIGR01164">
    <property type="entry name" value="rplP_bact"/>
    <property type="match status" value="1"/>
</dbReference>
<dbReference type="PANTHER" id="PTHR12220">
    <property type="entry name" value="50S/60S RIBOSOMAL PROTEIN L16"/>
    <property type="match status" value="1"/>
</dbReference>
<dbReference type="PANTHER" id="PTHR12220:SF13">
    <property type="entry name" value="LARGE RIBOSOMAL SUBUNIT PROTEIN UL16M"/>
    <property type="match status" value="1"/>
</dbReference>
<dbReference type="Pfam" id="PF00252">
    <property type="entry name" value="Ribosomal_L16"/>
    <property type="match status" value="1"/>
</dbReference>
<dbReference type="PRINTS" id="PR00060">
    <property type="entry name" value="RIBOSOMALL16"/>
</dbReference>
<dbReference type="SUPFAM" id="SSF54686">
    <property type="entry name" value="Ribosomal protein L16p/L10e"/>
    <property type="match status" value="1"/>
</dbReference>
<dbReference type="PROSITE" id="PS00586">
    <property type="entry name" value="RIBOSOMAL_L16_1"/>
    <property type="match status" value="1"/>
</dbReference>
<dbReference type="PROSITE" id="PS00701">
    <property type="entry name" value="RIBOSOMAL_L16_2"/>
    <property type="match status" value="1"/>
</dbReference>
<reference key="1">
    <citation type="journal article" date="2009" name="Appl. Environ. Microbiol.">
        <title>Rhizobium sp. strain NGR234 possesses a remarkable number of secretion systems.</title>
        <authorList>
            <person name="Schmeisser C."/>
            <person name="Liesegang H."/>
            <person name="Krysciak D."/>
            <person name="Bakkou N."/>
            <person name="Le Quere A."/>
            <person name="Wollherr A."/>
            <person name="Heinemeyer I."/>
            <person name="Morgenstern B."/>
            <person name="Pommerening-Roeser A."/>
            <person name="Flores M."/>
            <person name="Palacios R."/>
            <person name="Brenner S."/>
            <person name="Gottschalk G."/>
            <person name="Schmitz R.A."/>
            <person name="Broughton W.J."/>
            <person name="Perret X."/>
            <person name="Strittmatter A.W."/>
            <person name="Streit W.R."/>
        </authorList>
    </citation>
    <scope>NUCLEOTIDE SEQUENCE [LARGE SCALE GENOMIC DNA]</scope>
    <source>
        <strain>NBRC 101917 / NGR234</strain>
    </source>
</reference>
<keyword id="KW-1185">Reference proteome</keyword>
<keyword id="KW-0687">Ribonucleoprotein</keyword>
<keyword id="KW-0689">Ribosomal protein</keyword>
<keyword id="KW-0694">RNA-binding</keyword>
<keyword id="KW-0699">rRNA-binding</keyword>
<keyword id="KW-0820">tRNA-binding</keyword>
<organism>
    <name type="scientific">Sinorhizobium fredii (strain NBRC 101917 / NGR234)</name>
    <dbReference type="NCBI Taxonomy" id="394"/>
    <lineage>
        <taxon>Bacteria</taxon>
        <taxon>Pseudomonadati</taxon>
        <taxon>Pseudomonadota</taxon>
        <taxon>Alphaproteobacteria</taxon>
        <taxon>Hyphomicrobiales</taxon>
        <taxon>Rhizobiaceae</taxon>
        <taxon>Sinorhizobium/Ensifer group</taxon>
        <taxon>Sinorhizobium</taxon>
    </lineage>
</organism>
<gene>
    <name evidence="1" type="primary">rplP</name>
    <name type="ordered locus">NGR_c11980</name>
</gene>